<proteinExistence type="inferred from homology"/>
<reference key="1">
    <citation type="journal article" date="2003" name="Nature">
        <title>Unique physiological and pathogenic features of Leptospira interrogans revealed by whole-genome sequencing.</title>
        <authorList>
            <person name="Ren S.-X."/>
            <person name="Fu G."/>
            <person name="Jiang X.-G."/>
            <person name="Zeng R."/>
            <person name="Miao Y.-G."/>
            <person name="Xu H."/>
            <person name="Zhang Y.-X."/>
            <person name="Xiong H."/>
            <person name="Lu G."/>
            <person name="Lu L.-F."/>
            <person name="Jiang H.-Q."/>
            <person name="Jia J."/>
            <person name="Tu Y.-F."/>
            <person name="Jiang J.-X."/>
            <person name="Gu W.-Y."/>
            <person name="Zhang Y.-Q."/>
            <person name="Cai Z."/>
            <person name="Sheng H.-H."/>
            <person name="Yin H.-F."/>
            <person name="Zhang Y."/>
            <person name="Zhu G.-F."/>
            <person name="Wan M."/>
            <person name="Huang H.-L."/>
            <person name="Qian Z."/>
            <person name="Wang S.-Y."/>
            <person name="Ma W."/>
            <person name="Yao Z.-J."/>
            <person name="Shen Y."/>
            <person name="Qiang B.-Q."/>
            <person name="Xia Q.-C."/>
            <person name="Guo X.-K."/>
            <person name="Danchin A."/>
            <person name="Saint Girons I."/>
            <person name="Somerville R.L."/>
            <person name="Wen Y.-M."/>
            <person name="Shi M.-H."/>
            <person name="Chen Z."/>
            <person name="Xu J.-G."/>
            <person name="Zhao G.-P."/>
        </authorList>
    </citation>
    <scope>NUCLEOTIDE SEQUENCE [LARGE SCALE GENOMIC DNA]</scope>
    <source>
        <strain>56601</strain>
    </source>
</reference>
<accession>Q8F9D9</accession>
<evidence type="ECO:0000255" key="1">
    <source>
        <dbReference type="HAMAP-Rule" id="MF_00121"/>
    </source>
</evidence>
<keyword id="KW-0067">ATP-binding</keyword>
<keyword id="KW-0436">Ligase</keyword>
<keyword id="KW-0547">Nucleotide-binding</keyword>
<keyword id="KW-0648">Protein biosynthesis</keyword>
<keyword id="KW-1185">Reference proteome</keyword>
<feature type="chain" id="PRO_0000148801" description="Aspartyl/glutamyl-tRNA(Asn/Gln) amidotransferase subunit B">
    <location>
        <begin position="1"/>
        <end position="486"/>
    </location>
</feature>
<sequence>MAEFETIIGLEVHAQLNTESKIFSTSATKFGSPPNSQTNPVCLGLPGALPVLNEFALEKAIMAGLAFGCDITLFTKFDRKNYFYPDLPKGYQISQFDKPICTGGGVTFTIKGEDSARYVRLTRIHLEEDAGKLIHSADPNIPQSYVDLNRAGTPLIEIVSEPDMRSSDEAYYYLNSLKSVLKYIRVSDCNMEEGSLRCDANVSIRPKGSDKFGTRVEIKNLNSFKAVKAAIDYEVEWQKEMALEGKTFQQQTKLWDSVANKTVTMRTKEMSHDYRYFPDPDLPVIVLQKETVESVRSKLPELPNERKNRFVEKLGLPKYDAEVLTAEREVADYFEDALKVSGDAKKTSNWVKDEILGIVNKENITISEFSVSARRIGELVKLIADGKISGKIAKTVFEELLTSDKDAETIVTEKNLIVVRDDKEIERIVDEAIANNQDAVTKYKSGKDRALGAIVGYVMKVSKGKADPELVNQMLLEKLGPLPPKS</sequence>
<organism>
    <name type="scientific">Leptospira interrogans serogroup Icterohaemorrhagiae serovar Lai (strain 56601)</name>
    <dbReference type="NCBI Taxonomy" id="189518"/>
    <lineage>
        <taxon>Bacteria</taxon>
        <taxon>Pseudomonadati</taxon>
        <taxon>Spirochaetota</taxon>
        <taxon>Spirochaetia</taxon>
        <taxon>Leptospirales</taxon>
        <taxon>Leptospiraceae</taxon>
        <taxon>Leptospira</taxon>
    </lineage>
</organism>
<protein>
    <recommendedName>
        <fullName evidence="1">Aspartyl/glutamyl-tRNA(Asn/Gln) amidotransferase subunit B</fullName>
        <shortName evidence="1">Asp/Glu-ADT subunit B</shortName>
        <ecNumber evidence="1">6.3.5.-</ecNumber>
    </recommendedName>
</protein>
<comment type="function">
    <text evidence="1">Allows the formation of correctly charged Asn-tRNA(Asn) or Gln-tRNA(Gln) through the transamidation of misacylated Asp-tRNA(Asn) or Glu-tRNA(Gln) in organisms which lack either or both of asparaginyl-tRNA or glutaminyl-tRNA synthetases. The reaction takes place in the presence of glutamine and ATP through an activated phospho-Asp-tRNA(Asn) or phospho-Glu-tRNA(Gln).</text>
</comment>
<comment type="catalytic activity">
    <reaction evidence="1">
        <text>L-glutamyl-tRNA(Gln) + L-glutamine + ATP + H2O = L-glutaminyl-tRNA(Gln) + L-glutamate + ADP + phosphate + H(+)</text>
        <dbReference type="Rhea" id="RHEA:17521"/>
        <dbReference type="Rhea" id="RHEA-COMP:9681"/>
        <dbReference type="Rhea" id="RHEA-COMP:9684"/>
        <dbReference type="ChEBI" id="CHEBI:15377"/>
        <dbReference type="ChEBI" id="CHEBI:15378"/>
        <dbReference type="ChEBI" id="CHEBI:29985"/>
        <dbReference type="ChEBI" id="CHEBI:30616"/>
        <dbReference type="ChEBI" id="CHEBI:43474"/>
        <dbReference type="ChEBI" id="CHEBI:58359"/>
        <dbReference type="ChEBI" id="CHEBI:78520"/>
        <dbReference type="ChEBI" id="CHEBI:78521"/>
        <dbReference type="ChEBI" id="CHEBI:456216"/>
    </reaction>
</comment>
<comment type="catalytic activity">
    <reaction evidence="1">
        <text>L-aspartyl-tRNA(Asn) + L-glutamine + ATP + H2O = L-asparaginyl-tRNA(Asn) + L-glutamate + ADP + phosphate + 2 H(+)</text>
        <dbReference type="Rhea" id="RHEA:14513"/>
        <dbReference type="Rhea" id="RHEA-COMP:9674"/>
        <dbReference type="Rhea" id="RHEA-COMP:9677"/>
        <dbReference type="ChEBI" id="CHEBI:15377"/>
        <dbReference type="ChEBI" id="CHEBI:15378"/>
        <dbReference type="ChEBI" id="CHEBI:29985"/>
        <dbReference type="ChEBI" id="CHEBI:30616"/>
        <dbReference type="ChEBI" id="CHEBI:43474"/>
        <dbReference type="ChEBI" id="CHEBI:58359"/>
        <dbReference type="ChEBI" id="CHEBI:78515"/>
        <dbReference type="ChEBI" id="CHEBI:78516"/>
        <dbReference type="ChEBI" id="CHEBI:456216"/>
    </reaction>
</comment>
<comment type="subunit">
    <text evidence="1">Heterotrimer of A, B and C subunits.</text>
</comment>
<comment type="similarity">
    <text evidence="1">Belongs to the GatB/GatE family. GatB subfamily.</text>
</comment>
<name>GATB_LEPIN</name>
<dbReference type="EC" id="6.3.5.-" evidence="1"/>
<dbReference type="EMBL" id="AE010300">
    <property type="protein sequence ID" value="AAN47455.1"/>
    <property type="molecule type" value="Genomic_DNA"/>
</dbReference>
<dbReference type="RefSeq" id="NP_710437.1">
    <property type="nucleotide sequence ID" value="NC_004342.2"/>
</dbReference>
<dbReference type="RefSeq" id="WP_000807228.1">
    <property type="nucleotide sequence ID" value="NC_004342.2"/>
</dbReference>
<dbReference type="SMR" id="Q8F9D9"/>
<dbReference type="STRING" id="189518.LA_0256"/>
<dbReference type="PaxDb" id="189518-LA_0256"/>
<dbReference type="EnsemblBacteria" id="AAN47455">
    <property type="protein sequence ID" value="AAN47455"/>
    <property type="gene ID" value="LA_0256"/>
</dbReference>
<dbReference type="KEGG" id="lil:LA_0256"/>
<dbReference type="PATRIC" id="fig|189518.3.peg.257"/>
<dbReference type="HOGENOM" id="CLU_019240_0_0_12"/>
<dbReference type="InParanoid" id="Q8F9D9"/>
<dbReference type="OrthoDB" id="9804078at2"/>
<dbReference type="Proteomes" id="UP000001408">
    <property type="component" value="Chromosome I"/>
</dbReference>
<dbReference type="GO" id="GO:0050566">
    <property type="term" value="F:asparaginyl-tRNA synthase (glutamine-hydrolyzing) activity"/>
    <property type="evidence" value="ECO:0007669"/>
    <property type="project" value="RHEA"/>
</dbReference>
<dbReference type="GO" id="GO:0005524">
    <property type="term" value="F:ATP binding"/>
    <property type="evidence" value="ECO:0007669"/>
    <property type="project" value="UniProtKB-KW"/>
</dbReference>
<dbReference type="GO" id="GO:0050567">
    <property type="term" value="F:glutaminyl-tRNA synthase (glutamine-hydrolyzing) activity"/>
    <property type="evidence" value="ECO:0000318"/>
    <property type="project" value="GO_Central"/>
</dbReference>
<dbReference type="GO" id="GO:0070681">
    <property type="term" value="P:glutaminyl-tRNAGln biosynthesis via transamidation"/>
    <property type="evidence" value="ECO:0000318"/>
    <property type="project" value="GO_Central"/>
</dbReference>
<dbReference type="GO" id="GO:0006412">
    <property type="term" value="P:translation"/>
    <property type="evidence" value="ECO:0007669"/>
    <property type="project" value="UniProtKB-UniRule"/>
</dbReference>
<dbReference type="FunFam" id="1.10.10.410:FF:000001">
    <property type="entry name" value="Aspartyl/glutamyl-tRNA(Asn/Gln) amidotransferase subunit B"/>
    <property type="match status" value="1"/>
</dbReference>
<dbReference type="FunFam" id="1.10.150.380:FF:000003">
    <property type="entry name" value="Aspartyl/glutamyl-tRNA(Asn/Gln) amidotransferase subunit B"/>
    <property type="match status" value="1"/>
</dbReference>
<dbReference type="Gene3D" id="1.10.10.410">
    <property type="match status" value="1"/>
</dbReference>
<dbReference type="Gene3D" id="1.10.150.380">
    <property type="entry name" value="GatB domain, N-terminal subdomain"/>
    <property type="match status" value="1"/>
</dbReference>
<dbReference type="HAMAP" id="MF_00121">
    <property type="entry name" value="GatB"/>
    <property type="match status" value="1"/>
</dbReference>
<dbReference type="InterPro" id="IPR017959">
    <property type="entry name" value="Asn/Gln-tRNA_amidoTrfase_suB/E"/>
</dbReference>
<dbReference type="InterPro" id="IPR006075">
    <property type="entry name" value="Asn/Gln-tRNA_Trfase_suB/E_cat"/>
</dbReference>
<dbReference type="InterPro" id="IPR018027">
    <property type="entry name" value="Asn/Gln_amidotransferase"/>
</dbReference>
<dbReference type="InterPro" id="IPR003789">
    <property type="entry name" value="Asn/Gln_tRNA_amidoTrase-B-like"/>
</dbReference>
<dbReference type="InterPro" id="IPR004413">
    <property type="entry name" value="GatB"/>
</dbReference>
<dbReference type="InterPro" id="IPR042114">
    <property type="entry name" value="GatB_C_1"/>
</dbReference>
<dbReference type="InterPro" id="IPR023168">
    <property type="entry name" value="GatB_Yqey_C_2"/>
</dbReference>
<dbReference type="InterPro" id="IPR017958">
    <property type="entry name" value="Gln-tRNA_amidoTrfase_suB_CS"/>
</dbReference>
<dbReference type="InterPro" id="IPR014746">
    <property type="entry name" value="Gln_synth/guanido_kin_cat_dom"/>
</dbReference>
<dbReference type="NCBIfam" id="TIGR00133">
    <property type="entry name" value="gatB"/>
    <property type="match status" value="1"/>
</dbReference>
<dbReference type="NCBIfam" id="NF004012">
    <property type="entry name" value="PRK05477.1-2"/>
    <property type="match status" value="1"/>
</dbReference>
<dbReference type="NCBIfam" id="NF004014">
    <property type="entry name" value="PRK05477.1-4"/>
    <property type="match status" value="1"/>
</dbReference>
<dbReference type="PANTHER" id="PTHR11659">
    <property type="entry name" value="GLUTAMYL-TRNA GLN AMIDOTRANSFERASE SUBUNIT B MITOCHONDRIAL AND PROKARYOTIC PET112-RELATED"/>
    <property type="match status" value="1"/>
</dbReference>
<dbReference type="PANTHER" id="PTHR11659:SF0">
    <property type="entry name" value="GLUTAMYL-TRNA(GLN) AMIDOTRANSFERASE SUBUNIT B, MITOCHONDRIAL"/>
    <property type="match status" value="1"/>
</dbReference>
<dbReference type="Pfam" id="PF02934">
    <property type="entry name" value="GatB_N"/>
    <property type="match status" value="1"/>
</dbReference>
<dbReference type="Pfam" id="PF02637">
    <property type="entry name" value="GatB_Yqey"/>
    <property type="match status" value="1"/>
</dbReference>
<dbReference type="SMART" id="SM00845">
    <property type="entry name" value="GatB_Yqey"/>
    <property type="match status" value="1"/>
</dbReference>
<dbReference type="SUPFAM" id="SSF89095">
    <property type="entry name" value="GatB/YqeY motif"/>
    <property type="match status" value="1"/>
</dbReference>
<dbReference type="SUPFAM" id="SSF55931">
    <property type="entry name" value="Glutamine synthetase/guanido kinase"/>
    <property type="match status" value="1"/>
</dbReference>
<dbReference type="PROSITE" id="PS01234">
    <property type="entry name" value="GATB"/>
    <property type="match status" value="1"/>
</dbReference>
<gene>
    <name evidence="1" type="primary">gatB</name>
    <name type="ordered locus">LA_0256</name>
</gene>